<organism>
    <name type="scientific">Brucella abortus biovar 1 (strain 9-941)</name>
    <dbReference type="NCBI Taxonomy" id="262698"/>
    <lineage>
        <taxon>Bacteria</taxon>
        <taxon>Pseudomonadati</taxon>
        <taxon>Pseudomonadota</taxon>
        <taxon>Alphaproteobacteria</taxon>
        <taxon>Hyphomicrobiales</taxon>
        <taxon>Brucellaceae</taxon>
        <taxon>Brucella/Ochrobactrum group</taxon>
        <taxon>Brucella</taxon>
    </lineage>
</organism>
<proteinExistence type="inferred from homology"/>
<accession>Q577Y8</accession>
<sequence>MPTGKLRQKPPYAAIMTNSPVTPSTETQQPKRDALYARFLPQEADAPPVEWLIAEGLTDYEEALAFMEARVQATREGTASELVWLVEHPPLYTAGTSANAEDLLTPDRFPVFNTGRGGEYTYHGPGQRVAYVMLDLKRRREDVRAFVASLEQWIIETLAAFNIKGERREDRVGVWVVRPEKPRLADGSMCEDKIAAIGIRLRRWVSFHGIAINVEPDLSHYGGIVPCGISEHGVTSLVDLGLPVTMGDVDVALGKAFESVFGPRQTK</sequence>
<gene>
    <name evidence="1" type="primary">lipB</name>
    <name type="ordered locus">BruAb2_0635</name>
</gene>
<feature type="chain" id="PRO_0000242709" description="Octanoyltransferase">
    <location>
        <begin position="1"/>
        <end position="267"/>
    </location>
</feature>
<feature type="domain" description="BPL/LPL catalytic" evidence="2">
    <location>
        <begin position="77"/>
        <end position="265"/>
    </location>
</feature>
<feature type="region of interest" description="Disordered" evidence="3">
    <location>
        <begin position="1"/>
        <end position="30"/>
    </location>
</feature>
<feature type="compositionally biased region" description="Polar residues" evidence="3">
    <location>
        <begin position="16"/>
        <end position="28"/>
    </location>
</feature>
<feature type="active site" description="Acyl-thioester intermediate" evidence="1">
    <location>
        <position position="227"/>
    </location>
</feature>
<feature type="binding site" evidence="1">
    <location>
        <begin position="116"/>
        <end position="123"/>
    </location>
    <ligand>
        <name>substrate</name>
    </ligand>
</feature>
<feature type="binding site" evidence="1">
    <location>
        <begin position="196"/>
        <end position="198"/>
    </location>
    <ligand>
        <name>substrate</name>
    </ligand>
</feature>
<feature type="binding site" evidence="1">
    <location>
        <begin position="209"/>
        <end position="211"/>
    </location>
    <ligand>
        <name>substrate</name>
    </ligand>
</feature>
<feature type="site" description="Lowers pKa of active site Cys" evidence="1">
    <location>
        <position position="193"/>
    </location>
</feature>
<evidence type="ECO:0000255" key="1">
    <source>
        <dbReference type="HAMAP-Rule" id="MF_00013"/>
    </source>
</evidence>
<evidence type="ECO:0000255" key="2">
    <source>
        <dbReference type="PROSITE-ProRule" id="PRU01067"/>
    </source>
</evidence>
<evidence type="ECO:0000256" key="3">
    <source>
        <dbReference type="SAM" id="MobiDB-lite"/>
    </source>
</evidence>
<reference key="1">
    <citation type="journal article" date="2005" name="J. Bacteriol.">
        <title>Completion of the genome sequence of Brucella abortus and comparison to the highly similar genomes of Brucella melitensis and Brucella suis.</title>
        <authorList>
            <person name="Halling S.M."/>
            <person name="Peterson-Burch B.D."/>
            <person name="Bricker B.J."/>
            <person name="Zuerner R.L."/>
            <person name="Qing Z."/>
            <person name="Li L.-L."/>
            <person name="Kapur V."/>
            <person name="Alt D.P."/>
            <person name="Olsen S.C."/>
        </authorList>
    </citation>
    <scope>NUCLEOTIDE SEQUENCE [LARGE SCALE GENOMIC DNA]</scope>
    <source>
        <strain>9-941</strain>
    </source>
</reference>
<comment type="function">
    <text evidence="1">Catalyzes the transfer of endogenously produced octanoic acid from octanoyl-acyl-carrier-protein onto the lipoyl domains of lipoate-dependent enzymes. Lipoyl-ACP can also act as a substrate although octanoyl-ACP is likely to be the physiological substrate.</text>
</comment>
<comment type="catalytic activity">
    <reaction evidence="1">
        <text>octanoyl-[ACP] + L-lysyl-[protein] = N(6)-octanoyl-L-lysyl-[protein] + holo-[ACP] + H(+)</text>
        <dbReference type="Rhea" id="RHEA:17665"/>
        <dbReference type="Rhea" id="RHEA-COMP:9636"/>
        <dbReference type="Rhea" id="RHEA-COMP:9685"/>
        <dbReference type="Rhea" id="RHEA-COMP:9752"/>
        <dbReference type="Rhea" id="RHEA-COMP:9928"/>
        <dbReference type="ChEBI" id="CHEBI:15378"/>
        <dbReference type="ChEBI" id="CHEBI:29969"/>
        <dbReference type="ChEBI" id="CHEBI:64479"/>
        <dbReference type="ChEBI" id="CHEBI:78463"/>
        <dbReference type="ChEBI" id="CHEBI:78809"/>
        <dbReference type="EC" id="2.3.1.181"/>
    </reaction>
</comment>
<comment type="pathway">
    <text evidence="1">Protein modification; protein lipoylation via endogenous pathway; protein N(6)-(lipoyl)lysine from octanoyl-[acyl-carrier-protein]: step 1/2.</text>
</comment>
<comment type="subcellular location">
    <subcellularLocation>
        <location evidence="1">Cytoplasm</location>
    </subcellularLocation>
</comment>
<comment type="miscellaneous">
    <text evidence="1">In the reaction, the free carboxyl group of octanoic acid is attached via an amide linkage to the epsilon-amino group of a specific lysine residue of lipoyl domains of lipoate-dependent enzymes.</text>
</comment>
<comment type="similarity">
    <text evidence="1">Belongs to the LipB family.</text>
</comment>
<name>LIPB_BRUAB</name>
<protein>
    <recommendedName>
        <fullName evidence="1">Octanoyltransferase</fullName>
        <ecNumber evidence="1">2.3.1.181</ecNumber>
    </recommendedName>
    <alternativeName>
        <fullName evidence="1">Lipoate-protein ligase B</fullName>
    </alternativeName>
    <alternativeName>
        <fullName evidence="1">Lipoyl/octanoyl transferase</fullName>
    </alternativeName>
    <alternativeName>
        <fullName evidence="1">Octanoyl-[acyl-carrier-protein]-protein N-octanoyltransferase</fullName>
    </alternativeName>
</protein>
<keyword id="KW-0012">Acyltransferase</keyword>
<keyword id="KW-0963">Cytoplasm</keyword>
<keyword id="KW-0808">Transferase</keyword>
<dbReference type="EC" id="2.3.1.181" evidence="1"/>
<dbReference type="EMBL" id="AE017224">
    <property type="protein sequence ID" value="AAX76046.1"/>
    <property type="molecule type" value="Genomic_DNA"/>
</dbReference>
<dbReference type="SMR" id="Q577Y8"/>
<dbReference type="EnsemblBacteria" id="AAX76046">
    <property type="protein sequence ID" value="AAX76046"/>
    <property type="gene ID" value="BruAb2_0635"/>
</dbReference>
<dbReference type="KEGG" id="bmb:BruAb2_0635"/>
<dbReference type="HOGENOM" id="CLU_035168_3_0_5"/>
<dbReference type="UniPathway" id="UPA00538">
    <property type="reaction ID" value="UER00592"/>
</dbReference>
<dbReference type="Proteomes" id="UP000000540">
    <property type="component" value="Chromosome II"/>
</dbReference>
<dbReference type="GO" id="GO:0005737">
    <property type="term" value="C:cytoplasm"/>
    <property type="evidence" value="ECO:0007669"/>
    <property type="project" value="UniProtKB-SubCell"/>
</dbReference>
<dbReference type="GO" id="GO:0033819">
    <property type="term" value="F:lipoyl(octanoyl) transferase activity"/>
    <property type="evidence" value="ECO:0007669"/>
    <property type="project" value="UniProtKB-EC"/>
</dbReference>
<dbReference type="GO" id="GO:0036211">
    <property type="term" value="P:protein modification process"/>
    <property type="evidence" value="ECO:0007669"/>
    <property type="project" value="InterPro"/>
</dbReference>
<dbReference type="CDD" id="cd16444">
    <property type="entry name" value="LipB"/>
    <property type="match status" value="1"/>
</dbReference>
<dbReference type="FunFam" id="3.30.930.10:FF:000159">
    <property type="entry name" value="Octanoyltransferase"/>
    <property type="match status" value="1"/>
</dbReference>
<dbReference type="Gene3D" id="3.30.930.10">
    <property type="entry name" value="Bira Bifunctional Protein, Domain 2"/>
    <property type="match status" value="1"/>
</dbReference>
<dbReference type="HAMAP" id="MF_00013">
    <property type="entry name" value="LipB"/>
    <property type="match status" value="1"/>
</dbReference>
<dbReference type="InterPro" id="IPR045864">
    <property type="entry name" value="aa-tRNA-synth_II/BPL/LPL"/>
</dbReference>
<dbReference type="InterPro" id="IPR004143">
    <property type="entry name" value="BPL_LPL_catalytic"/>
</dbReference>
<dbReference type="InterPro" id="IPR000544">
    <property type="entry name" value="Octanoyltransferase"/>
</dbReference>
<dbReference type="InterPro" id="IPR020605">
    <property type="entry name" value="Octanoyltransferase_CS"/>
</dbReference>
<dbReference type="NCBIfam" id="TIGR00214">
    <property type="entry name" value="lipB"/>
    <property type="match status" value="1"/>
</dbReference>
<dbReference type="NCBIfam" id="NF010921">
    <property type="entry name" value="PRK14341.1"/>
    <property type="match status" value="1"/>
</dbReference>
<dbReference type="NCBIfam" id="NF010925">
    <property type="entry name" value="PRK14345.1"/>
    <property type="match status" value="1"/>
</dbReference>
<dbReference type="PANTHER" id="PTHR10993:SF7">
    <property type="entry name" value="LIPOYLTRANSFERASE 2, MITOCHONDRIAL-RELATED"/>
    <property type="match status" value="1"/>
</dbReference>
<dbReference type="PANTHER" id="PTHR10993">
    <property type="entry name" value="OCTANOYLTRANSFERASE"/>
    <property type="match status" value="1"/>
</dbReference>
<dbReference type="Pfam" id="PF21948">
    <property type="entry name" value="LplA-B_cat"/>
    <property type="match status" value="1"/>
</dbReference>
<dbReference type="SUPFAM" id="SSF55681">
    <property type="entry name" value="Class II aaRS and biotin synthetases"/>
    <property type="match status" value="1"/>
</dbReference>
<dbReference type="PROSITE" id="PS51733">
    <property type="entry name" value="BPL_LPL_CATALYTIC"/>
    <property type="match status" value="1"/>
</dbReference>
<dbReference type="PROSITE" id="PS01313">
    <property type="entry name" value="LIPB"/>
    <property type="match status" value="1"/>
</dbReference>